<name>DDL_BURCH</name>
<comment type="function">
    <text evidence="2">Cell wall formation.</text>
</comment>
<comment type="catalytic activity">
    <reaction evidence="2">
        <text>2 D-alanine + ATP = D-alanyl-D-alanine + ADP + phosphate + H(+)</text>
        <dbReference type="Rhea" id="RHEA:11224"/>
        <dbReference type="ChEBI" id="CHEBI:15378"/>
        <dbReference type="ChEBI" id="CHEBI:30616"/>
        <dbReference type="ChEBI" id="CHEBI:43474"/>
        <dbReference type="ChEBI" id="CHEBI:57416"/>
        <dbReference type="ChEBI" id="CHEBI:57822"/>
        <dbReference type="ChEBI" id="CHEBI:456216"/>
        <dbReference type="EC" id="6.3.2.4"/>
    </reaction>
</comment>
<comment type="cofactor">
    <cofactor evidence="1">
        <name>Mg(2+)</name>
        <dbReference type="ChEBI" id="CHEBI:18420"/>
    </cofactor>
    <cofactor evidence="1">
        <name>Mn(2+)</name>
        <dbReference type="ChEBI" id="CHEBI:29035"/>
    </cofactor>
    <text evidence="1">Binds 2 magnesium or manganese ions per subunit.</text>
</comment>
<comment type="pathway">
    <text evidence="2">Cell wall biogenesis; peptidoglycan biosynthesis.</text>
</comment>
<comment type="subcellular location">
    <subcellularLocation>
        <location evidence="2">Cytoplasm</location>
    </subcellularLocation>
</comment>
<comment type="similarity">
    <text evidence="2">Belongs to the D-alanine--D-alanine ligase family.</text>
</comment>
<dbReference type="EC" id="6.3.2.4" evidence="2"/>
<dbReference type="EMBL" id="CP000458">
    <property type="protein sequence ID" value="ABK07315.1"/>
    <property type="molecule type" value="Genomic_DNA"/>
</dbReference>
<dbReference type="RefSeq" id="WP_011544503.1">
    <property type="nucleotide sequence ID" value="NC_008542.1"/>
</dbReference>
<dbReference type="SMR" id="A0K488"/>
<dbReference type="KEGG" id="bch:Bcen2424_0561"/>
<dbReference type="HOGENOM" id="CLU_039268_1_2_4"/>
<dbReference type="UniPathway" id="UPA00219"/>
<dbReference type="GO" id="GO:0005829">
    <property type="term" value="C:cytosol"/>
    <property type="evidence" value="ECO:0007669"/>
    <property type="project" value="TreeGrafter"/>
</dbReference>
<dbReference type="GO" id="GO:0005524">
    <property type="term" value="F:ATP binding"/>
    <property type="evidence" value="ECO:0007669"/>
    <property type="project" value="UniProtKB-KW"/>
</dbReference>
<dbReference type="GO" id="GO:0008716">
    <property type="term" value="F:D-alanine-D-alanine ligase activity"/>
    <property type="evidence" value="ECO:0007669"/>
    <property type="project" value="UniProtKB-UniRule"/>
</dbReference>
<dbReference type="GO" id="GO:0046872">
    <property type="term" value="F:metal ion binding"/>
    <property type="evidence" value="ECO:0007669"/>
    <property type="project" value="UniProtKB-KW"/>
</dbReference>
<dbReference type="GO" id="GO:0071555">
    <property type="term" value="P:cell wall organization"/>
    <property type="evidence" value="ECO:0007669"/>
    <property type="project" value="UniProtKB-KW"/>
</dbReference>
<dbReference type="GO" id="GO:0009252">
    <property type="term" value="P:peptidoglycan biosynthetic process"/>
    <property type="evidence" value="ECO:0007669"/>
    <property type="project" value="UniProtKB-UniRule"/>
</dbReference>
<dbReference type="GO" id="GO:0008360">
    <property type="term" value="P:regulation of cell shape"/>
    <property type="evidence" value="ECO:0007669"/>
    <property type="project" value="UniProtKB-KW"/>
</dbReference>
<dbReference type="FunFam" id="3.30.1490.20:FF:000007">
    <property type="entry name" value="D-alanine--D-alanine ligase"/>
    <property type="match status" value="1"/>
</dbReference>
<dbReference type="FunFam" id="3.30.470.20:FF:000008">
    <property type="entry name" value="D-alanine--D-alanine ligase"/>
    <property type="match status" value="1"/>
</dbReference>
<dbReference type="FunFam" id="3.40.50.20:FF:000013">
    <property type="entry name" value="D-alanine--D-alanine ligase"/>
    <property type="match status" value="1"/>
</dbReference>
<dbReference type="Gene3D" id="3.40.50.20">
    <property type="match status" value="1"/>
</dbReference>
<dbReference type="Gene3D" id="3.30.1490.20">
    <property type="entry name" value="ATP-grasp fold, A domain"/>
    <property type="match status" value="1"/>
</dbReference>
<dbReference type="Gene3D" id="3.30.470.20">
    <property type="entry name" value="ATP-grasp fold, B domain"/>
    <property type="match status" value="1"/>
</dbReference>
<dbReference type="HAMAP" id="MF_00047">
    <property type="entry name" value="Dala_Dala_lig"/>
    <property type="match status" value="1"/>
</dbReference>
<dbReference type="InterPro" id="IPR011761">
    <property type="entry name" value="ATP-grasp"/>
</dbReference>
<dbReference type="InterPro" id="IPR013815">
    <property type="entry name" value="ATP_grasp_subdomain_1"/>
</dbReference>
<dbReference type="InterPro" id="IPR000291">
    <property type="entry name" value="D-Ala_lig_Van_CS"/>
</dbReference>
<dbReference type="InterPro" id="IPR005905">
    <property type="entry name" value="D_ala_D_ala"/>
</dbReference>
<dbReference type="InterPro" id="IPR011095">
    <property type="entry name" value="Dala_Dala_lig_C"/>
</dbReference>
<dbReference type="InterPro" id="IPR011127">
    <property type="entry name" value="Dala_Dala_lig_N"/>
</dbReference>
<dbReference type="InterPro" id="IPR016185">
    <property type="entry name" value="PreATP-grasp_dom_sf"/>
</dbReference>
<dbReference type="NCBIfam" id="TIGR01205">
    <property type="entry name" value="D_ala_D_alaTIGR"/>
    <property type="match status" value="1"/>
</dbReference>
<dbReference type="NCBIfam" id="NF002378">
    <property type="entry name" value="PRK01372.1"/>
    <property type="match status" value="1"/>
</dbReference>
<dbReference type="PANTHER" id="PTHR23132">
    <property type="entry name" value="D-ALANINE--D-ALANINE LIGASE"/>
    <property type="match status" value="1"/>
</dbReference>
<dbReference type="PANTHER" id="PTHR23132:SF23">
    <property type="entry name" value="D-ALANINE--D-ALANINE LIGASE B"/>
    <property type="match status" value="1"/>
</dbReference>
<dbReference type="Pfam" id="PF07478">
    <property type="entry name" value="Dala_Dala_lig_C"/>
    <property type="match status" value="1"/>
</dbReference>
<dbReference type="Pfam" id="PF01820">
    <property type="entry name" value="Dala_Dala_lig_N"/>
    <property type="match status" value="1"/>
</dbReference>
<dbReference type="PIRSF" id="PIRSF039102">
    <property type="entry name" value="Ddl/VanB"/>
    <property type="match status" value="1"/>
</dbReference>
<dbReference type="SUPFAM" id="SSF56059">
    <property type="entry name" value="Glutathione synthetase ATP-binding domain-like"/>
    <property type="match status" value="1"/>
</dbReference>
<dbReference type="SUPFAM" id="SSF52440">
    <property type="entry name" value="PreATP-grasp domain"/>
    <property type="match status" value="1"/>
</dbReference>
<dbReference type="PROSITE" id="PS50975">
    <property type="entry name" value="ATP_GRASP"/>
    <property type="match status" value="1"/>
</dbReference>
<dbReference type="PROSITE" id="PS00843">
    <property type="entry name" value="DALA_DALA_LIGASE_1"/>
    <property type="match status" value="1"/>
</dbReference>
<dbReference type="PROSITE" id="PS00844">
    <property type="entry name" value="DALA_DALA_LIGASE_2"/>
    <property type="match status" value="1"/>
</dbReference>
<organism>
    <name type="scientific">Burkholderia cenocepacia (strain HI2424)</name>
    <dbReference type="NCBI Taxonomy" id="331272"/>
    <lineage>
        <taxon>Bacteria</taxon>
        <taxon>Pseudomonadati</taxon>
        <taxon>Pseudomonadota</taxon>
        <taxon>Betaproteobacteria</taxon>
        <taxon>Burkholderiales</taxon>
        <taxon>Burkholderiaceae</taxon>
        <taxon>Burkholderia</taxon>
        <taxon>Burkholderia cepacia complex</taxon>
    </lineage>
</organism>
<feature type="chain" id="PRO_0000341068" description="D-alanine--D-alanine ligase">
    <location>
        <begin position="1"/>
        <end position="313"/>
    </location>
</feature>
<feature type="domain" description="ATP-grasp" evidence="2">
    <location>
        <begin position="108"/>
        <end position="308"/>
    </location>
</feature>
<feature type="binding site" evidence="2">
    <location>
        <begin position="138"/>
        <end position="193"/>
    </location>
    <ligand>
        <name>ATP</name>
        <dbReference type="ChEBI" id="CHEBI:30616"/>
    </ligand>
</feature>
<feature type="binding site" evidence="2">
    <location>
        <position position="262"/>
    </location>
    <ligand>
        <name>Mg(2+)</name>
        <dbReference type="ChEBI" id="CHEBI:18420"/>
        <label>1</label>
    </ligand>
</feature>
<feature type="binding site" evidence="2">
    <location>
        <position position="275"/>
    </location>
    <ligand>
        <name>Mg(2+)</name>
        <dbReference type="ChEBI" id="CHEBI:18420"/>
        <label>1</label>
    </ligand>
</feature>
<feature type="binding site" evidence="2">
    <location>
        <position position="275"/>
    </location>
    <ligand>
        <name>Mg(2+)</name>
        <dbReference type="ChEBI" id="CHEBI:18420"/>
        <label>2</label>
    </ligand>
</feature>
<feature type="binding site" evidence="2">
    <location>
        <position position="277"/>
    </location>
    <ligand>
        <name>Mg(2+)</name>
        <dbReference type="ChEBI" id="CHEBI:18420"/>
        <label>2</label>
    </ligand>
</feature>
<proteinExistence type="inferred from homology"/>
<gene>
    <name evidence="2" type="primary">ddl</name>
    <name type="ordered locus">Bcen2424_0561</name>
</gene>
<keyword id="KW-0067">ATP-binding</keyword>
<keyword id="KW-0133">Cell shape</keyword>
<keyword id="KW-0961">Cell wall biogenesis/degradation</keyword>
<keyword id="KW-0963">Cytoplasm</keyword>
<keyword id="KW-0436">Ligase</keyword>
<keyword id="KW-0460">Magnesium</keyword>
<keyword id="KW-0464">Manganese</keyword>
<keyword id="KW-0479">Metal-binding</keyword>
<keyword id="KW-0547">Nucleotide-binding</keyword>
<keyword id="KW-0573">Peptidoglycan synthesis</keyword>
<evidence type="ECO:0000250" key="1"/>
<evidence type="ECO:0000255" key="2">
    <source>
        <dbReference type="HAMAP-Rule" id="MF_00047"/>
    </source>
</evidence>
<protein>
    <recommendedName>
        <fullName evidence="2">D-alanine--D-alanine ligase</fullName>
        <ecNumber evidence="2">6.3.2.4</ecNumber>
    </recommendedName>
    <alternativeName>
        <fullName evidence="2">D-Ala-D-Ala ligase</fullName>
    </alternativeName>
    <alternativeName>
        <fullName evidence="2">D-alanylalanine synthetase</fullName>
    </alternativeName>
</protein>
<reference key="1">
    <citation type="submission" date="2006-08" db="EMBL/GenBank/DDBJ databases">
        <title>Complete sequence of chromosome 1 of Burkholderia cenocepacia HI2424.</title>
        <authorList>
            <person name="Copeland A."/>
            <person name="Lucas S."/>
            <person name="Lapidus A."/>
            <person name="Barry K."/>
            <person name="Detter J.C."/>
            <person name="Glavina del Rio T."/>
            <person name="Hammon N."/>
            <person name="Israni S."/>
            <person name="Pitluck S."/>
            <person name="Chain P."/>
            <person name="Malfatti S."/>
            <person name="Shin M."/>
            <person name="Vergez L."/>
            <person name="Schmutz J."/>
            <person name="Larimer F."/>
            <person name="Land M."/>
            <person name="Hauser L."/>
            <person name="Kyrpides N."/>
            <person name="Kim E."/>
            <person name="LiPuma J.J."/>
            <person name="Gonzalez C.F."/>
            <person name="Konstantinidis K."/>
            <person name="Tiedje J.M."/>
            <person name="Richardson P."/>
        </authorList>
    </citation>
    <scope>NUCLEOTIDE SEQUENCE [LARGE SCALE GENOMIC DNA]</scope>
    <source>
        <strain>HI2424</strain>
    </source>
</reference>
<accession>A0K488</accession>
<sequence length="313" mass="33284">MSGIDPKRFGKVAVLFGGESAEREVSLTSGRLVLQGLRDAGVDAHPFDPAERPLSALKDEGFVRAFNALHGGYGENGQIQGALDFYGIRYTGSGVLGSALGLDKFRTKLVWQQTGVPTPPFETVMRGDDLAARATDIVAKLGLPLFVKPASEGSSVAVLKVKTADALPAALAEAATHDKIVIVEKSIEGGGEYTACIAGDLDLPLIKIVPAGEFYDYHAKYVADDTQYLIPCGLPAEQETELKRIARRAFDVLGCTDWGRADFMLDAAGNAYFLEVNTAPGMTDHSLPPKAARAVGIGYSELVVKVLSLTLND</sequence>